<evidence type="ECO:0000255" key="1">
    <source>
        <dbReference type="HAMAP-Rule" id="MF_00376"/>
    </source>
</evidence>
<protein>
    <recommendedName>
        <fullName evidence="1">Dephospho-CoA kinase</fullName>
        <ecNumber evidence="1">2.7.1.24</ecNumber>
    </recommendedName>
    <alternativeName>
        <fullName evidence="1">Dephosphocoenzyme A kinase</fullName>
    </alternativeName>
</protein>
<reference key="1">
    <citation type="submission" date="2006-03" db="EMBL/GenBank/DDBJ databases">
        <title>Complete sequence of Rhodopseudomonas palustris BisB18.</title>
        <authorList>
            <consortium name="US DOE Joint Genome Institute"/>
            <person name="Copeland A."/>
            <person name="Lucas S."/>
            <person name="Lapidus A."/>
            <person name="Barry K."/>
            <person name="Detter J.C."/>
            <person name="Glavina del Rio T."/>
            <person name="Hammon N."/>
            <person name="Israni S."/>
            <person name="Dalin E."/>
            <person name="Tice H."/>
            <person name="Pitluck S."/>
            <person name="Chain P."/>
            <person name="Malfatti S."/>
            <person name="Shin M."/>
            <person name="Vergez L."/>
            <person name="Schmutz J."/>
            <person name="Larimer F."/>
            <person name="Land M."/>
            <person name="Hauser L."/>
            <person name="Pelletier D.A."/>
            <person name="Kyrpides N."/>
            <person name="Anderson I."/>
            <person name="Oda Y."/>
            <person name="Harwood C.S."/>
            <person name="Richardson P."/>
        </authorList>
    </citation>
    <scope>NUCLEOTIDE SEQUENCE [LARGE SCALE GENOMIC DNA]</scope>
    <source>
        <strain>BisB18</strain>
    </source>
</reference>
<comment type="function">
    <text evidence="1">Catalyzes the phosphorylation of the 3'-hydroxyl group of dephosphocoenzyme A to form coenzyme A.</text>
</comment>
<comment type="catalytic activity">
    <reaction evidence="1">
        <text>3'-dephospho-CoA + ATP = ADP + CoA + H(+)</text>
        <dbReference type="Rhea" id="RHEA:18245"/>
        <dbReference type="ChEBI" id="CHEBI:15378"/>
        <dbReference type="ChEBI" id="CHEBI:30616"/>
        <dbReference type="ChEBI" id="CHEBI:57287"/>
        <dbReference type="ChEBI" id="CHEBI:57328"/>
        <dbReference type="ChEBI" id="CHEBI:456216"/>
        <dbReference type="EC" id="2.7.1.24"/>
    </reaction>
</comment>
<comment type="pathway">
    <text evidence="1">Cofactor biosynthesis; coenzyme A biosynthesis; CoA from (R)-pantothenate: step 5/5.</text>
</comment>
<comment type="subcellular location">
    <subcellularLocation>
        <location evidence="1">Cytoplasm</location>
    </subcellularLocation>
</comment>
<comment type="similarity">
    <text evidence="1">Belongs to the CoaE family.</text>
</comment>
<dbReference type="EC" id="2.7.1.24" evidence="1"/>
<dbReference type="EMBL" id="CP000301">
    <property type="protein sequence ID" value="ABD85871.1"/>
    <property type="molecule type" value="Genomic_DNA"/>
</dbReference>
<dbReference type="SMR" id="Q21CL5"/>
<dbReference type="STRING" id="316056.RPC_0296"/>
<dbReference type="KEGG" id="rpc:RPC_0296"/>
<dbReference type="eggNOG" id="COG0237">
    <property type="taxonomic scope" value="Bacteria"/>
</dbReference>
<dbReference type="HOGENOM" id="CLU_057180_3_0_5"/>
<dbReference type="OrthoDB" id="9812943at2"/>
<dbReference type="UniPathway" id="UPA00241">
    <property type="reaction ID" value="UER00356"/>
</dbReference>
<dbReference type="GO" id="GO:0005737">
    <property type="term" value="C:cytoplasm"/>
    <property type="evidence" value="ECO:0007669"/>
    <property type="project" value="UniProtKB-SubCell"/>
</dbReference>
<dbReference type="GO" id="GO:0005524">
    <property type="term" value="F:ATP binding"/>
    <property type="evidence" value="ECO:0007669"/>
    <property type="project" value="UniProtKB-UniRule"/>
</dbReference>
<dbReference type="GO" id="GO:0004140">
    <property type="term" value="F:dephospho-CoA kinase activity"/>
    <property type="evidence" value="ECO:0007669"/>
    <property type="project" value="UniProtKB-UniRule"/>
</dbReference>
<dbReference type="GO" id="GO:0015937">
    <property type="term" value="P:coenzyme A biosynthetic process"/>
    <property type="evidence" value="ECO:0007669"/>
    <property type="project" value="UniProtKB-UniRule"/>
</dbReference>
<dbReference type="CDD" id="cd02022">
    <property type="entry name" value="DPCK"/>
    <property type="match status" value="1"/>
</dbReference>
<dbReference type="Gene3D" id="3.40.50.300">
    <property type="entry name" value="P-loop containing nucleotide triphosphate hydrolases"/>
    <property type="match status" value="1"/>
</dbReference>
<dbReference type="HAMAP" id="MF_00376">
    <property type="entry name" value="Dephospho_CoA_kinase"/>
    <property type="match status" value="1"/>
</dbReference>
<dbReference type="InterPro" id="IPR001977">
    <property type="entry name" value="Depp_CoAkinase"/>
</dbReference>
<dbReference type="InterPro" id="IPR027417">
    <property type="entry name" value="P-loop_NTPase"/>
</dbReference>
<dbReference type="NCBIfam" id="TIGR00152">
    <property type="entry name" value="dephospho-CoA kinase"/>
    <property type="match status" value="1"/>
</dbReference>
<dbReference type="PANTHER" id="PTHR10695:SF46">
    <property type="entry name" value="BIFUNCTIONAL COENZYME A SYNTHASE-RELATED"/>
    <property type="match status" value="1"/>
</dbReference>
<dbReference type="PANTHER" id="PTHR10695">
    <property type="entry name" value="DEPHOSPHO-COA KINASE-RELATED"/>
    <property type="match status" value="1"/>
</dbReference>
<dbReference type="Pfam" id="PF01121">
    <property type="entry name" value="CoaE"/>
    <property type="match status" value="1"/>
</dbReference>
<dbReference type="SUPFAM" id="SSF52540">
    <property type="entry name" value="P-loop containing nucleoside triphosphate hydrolases"/>
    <property type="match status" value="1"/>
</dbReference>
<dbReference type="PROSITE" id="PS51219">
    <property type="entry name" value="DPCK"/>
    <property type="match status" value="1"/>
</dbReference>
<name>COAE_RHOPB</name>
<proteinExistence type="inferred from homology"/>
<keyword id="KW-0067">ATP-binding</keyword>
<keyword id="KW-0173">Coenzyme A biosynthesis</keyword>
<keyword id="KW-0963">Cytoplasm</keyword>
<keyword id="KW-0418">Kinase</keyword>
<keyword id="KW-0547">Nucleotide-binding</keyword>
<keyword id="KW-0808">Transferase</keyword>
<organism>
    <name type="scientific">Rhodopseudomonas palustris (strain BisB18)</name>
    <dbReference type="NCBI Taxonomy" id="316056"/>
    <lineage>
        <taxon>Bacteria</taxon>
        <taxon>Pseudomonadati</taxon>
        <taxon>Pseudomonadota</taxon>
        <taxon>Alphaproteobacteria</taxon>
        <taxon>Hyphomicrobiales</taxon>
        <taxon>Nitrobacteraceae</taxon>
        <taxon>Rhodopseudomonas</taxon>
    </lineage>
</organism>
<gene>
    <name evidence="1" type="primary">coaE</name>
    <name type="ordered locus">RPC_0296</name>
</gene>
<accession>Q21CL5</accession>
<feature type="chain" id="PRO_0000243329" description="Dephospho-CoA kinase">
    <location>
        <begin position="1"/>
        <end position="199"/>
    </location>
</feature>
<feature type="domain" description="DPCK" evidence="1">
    <location>
        <begin position="3"/>
        <end position="199"/>
    </location>
</feature>
<feature type="binding site" evidence="1">
    <location>
        <begin position="11"/>
        <end position="16"/>
    </location>
    <ligand>
        <name>ATP</name>
        <dbReference type="ChEBI" id="CHEBI:30616"/>
    </ligand>
</feature>
<sequence length="199" mass="21393">MRILGLTGSIGMGKSTTARLFAEAGVPVYDADATVHQIYEGEAAPAVETAFPGTTVNGKVDRALLSARVLHDAAAMQRLEAIVHPMLRAHHQQFLADAEKSGAPVAVVDVPLLYETGGDARVDAVVVVTTSHQVQRARILARQGMTDEKLDALLARQLPDAEKRQRADFVVDTSNGLEPVRAQIREILAATAKMPQRRA</sequence>